<sequence>MDGFDKTMKFSIQDEKQSVHVNDVLLTVYDALQEKGYNPINQIVGYLLSGDPAYIPRHKDARSIIRKLERDELIEELVKSYLKHHREE</sequence>
<reference key="1">
    <citation type="submission" date="2008-10" db="EMBL/GenBank/DDBJ databases">
        <title>Genome sequence of Bacillus anthracis str. CDC 684.</title>
        <authorList>
            <person name="Dodson R.J."/>
            <person name="Munk A.C."/>
            <person name="Brettin T."/>
            <person name="Bruce D."/>
            <person name="Detter C."/>
            <person name="Tapia R."/>
            <person name="Han C."/>
            <person name="Sutton G."/>
            <person name="Sims D."/>
        </authorList>
    </citation>
    <scope>NUCLEOTIDE SEQUENCE [LARGE SCALE GENOMIC DNA]</scope>
    <source>
        <strain>CDC 684 / NRRL 3495</strain>
    </source>
</reference>
<feature type="chain" id="PRO_1000185036" description="UPF0297 protein BAMEG_4652">
    <location>
        <begin position="1"/>
        <end position="88"/>
    </location>
</feature>
<protein>
    <recommendedName>
        <fullName evidence="1">UPF0297 protein BAMEG_4652</fullName>
    </recommendedName>
</protein>
<organism>
    <name type="scientific">Bacillus anthracis (strain CDC 684 / NRRL 3495)</name>
    <dbReference type="NCBI Taxonomy" id="568206"/>
    <lineage>
        <taxon>Bacteria</taxon>
        <taxon>Bacillati</taxon>
        <taxon>Bacillota</taxon>
        <taxon>Bacilli</taxon>
        <taxon>Bacillales</taxon>
        <taxon>Bacillaceae</taxon>
        <taxon>Bacillus</taxon>
        <taxon>Bacillus cereus group</taxon>
    </lineage>
</organism>
<evidence type="ECO:0000255" key="1">
    <source>
        <dbReference type="HAMAP-Rule" id="MF_01507"/>
    </source>
</evidence>
<accession>C3L5Z3</accession>
<name>Y4652_BACAC</name>
<proteinExistence type="inferred from homology"/>
<gene>
    <name type="ordered locus">BAMEG_4652</name>
</gene>
<comment type="similarity">
    <text evidence="1">Belongs to the UPF0297 family.</text>
</comment>
<dbReference type="EMBL" id="CP001215">
    <property type="protein sequence ID" value="ACP12458.1"/>
    <property type="molecule type" value="Genomic_DNA"/>
</dbReference>
<dbReference type="RefSeq" id="WP_000348590.1">
    <property type="nucleotide sequence ID" value="NC_012581.1"/>
</dbReference>
<dbReference type="SMR" id="C3L5Z3"/>
<dbReference type="KEGG" id="bah:BAMEG_4652"/>
<dbReference type="HOGENOM" id="CLU_162466_0_0_9"/>
<dbReference type="HAMAP" id="MF_01507">
    <property type="entry name" value="UPF0297"/>
    <property type="match status" value="1"/>
</dbReference>
<dbReference type="InterPro" id="IPR009309">
    <property type="entry name" value="IreB"/>
</dbReference>
<dbReference type="NCBIfam" id="NF003997">
    <property type="entry name" value="PRK05473.1"/>
    <property type="match status" value="1"/>
</dbReference>
<dbReference type="PANTHER" id="PTHR40067">
    <property type="entry name" value="UPF0297 PROTEIN YRZL"/>
    <property type="match status" value="1"/>
</dbReference>
<dbReference type="PANTHER" id="PTHR40067:SF1">
    <property type="entry name" value="UPF0297 PROTEIN YRZL"/>
    <property type="match status" value="1"/>
</dbReference>
<dbReference type="Pfam" id="PF06135">
    <property type="entry name" value="IreB"/>
    <property type="match status" value="1"/>
</dbReference>
<dbReference type="PIRSF" id="PIRSF037258">
    <property type="entry name" value="DUF965_bac"/>
    <property type="match status" value="1"/>
</dbReference>